<accession>A7Z4X5</accession>
<proteinExistence type="inferred from homology"/>
<feature type="chain" id="PRO_0000335116" description="DNA mismatch repair protein MutS">
    <location>
        <begin position="1"/>
        <end position="862"/>
    </location>
</feature>
<feature type="binding site" evidence="1">
    <location>
        <begin position="603"/>
        <end position="610"/>
    </location>
    <ligand>
        <name>ATP</name>
        <dbReference type="ChEBI" id="CHEBI:30616"/>
    </ligand>
</feature>
<sequence>MMASYTPMIQQYLKIKAEHQDAFLFFRLGDFYEMFFEDAKKASQELEITLTSRDGGSADKIPMCGVPYHSAAAYIEQLIKKGYKVAICEQTEDPKAAKGVVKREVVQLITPGTVMDGKGIHESENNFIASVSEFRDGYGLALSDLTTGENLAVFIERIEDVMSEIYSVSAKEIVVSSKFNEHTAAQLKERCGATISIEDGEITERIEIAKHLPGEELTETFMRLYTYLQKTQKRSLDHLQPVQVYELEEAMKIDLYSKRNLELTETIRSKSKKGSLLWLLDETKTAMGGRLLKQWIDRPLIRASQIEERQEMVETLINHLFEREDLRERLKEVYDLERLAGRVAFGNVNARDLIQLKESLKQVPSIKELVGSLNHKKAKERAGLIDPCGDLLDLLEEALHENPPLSLKEGNLIKDGYHQKLDEYRDASKNGKDWIARLEQQERAYTGIRSLKVGFNKVFGYYIEVTKANLHLLEDGRYERKQTLTNAERYITPELKEKEALILEAENNICELEYELFAVLREKVKQFIPRLQRLAKQMSELDALQCFATISENRHYTKPVFSDNEVKVIEGRHPVVEKVMDSQEYVPNNCLMGDSREMLLITGPNMSGKSTYMRQIALLSIMAQIGCFVPAKEAVLPIFDQIFTRIGAADDLISGQSTFMVEMLEAKNAIVNATKDSLILFDEIGRGTSTYDGMALAQAIIEYVHDHIGAKTLFSTHYHELTVLEDKLPQLKNVHVRAEEYNGTVVFLHQIKEGAADKSYGIHVAQLAELPDDLISRAQEILKQLEQTGDKPELPAVSEKKSAVREEPAQLSFFADGEKEQKAPAVSNKEKQVLEAFKSINILDMTPLEAMNEMYKLQKKLK</sequence>
<comment type="function">
    <text evidence="1">This protein is involved in the repair of mismatches in DNA. It is possible that it carries out the mismatch recognition step. This protein has a weak ATPase activity.</text>
</comment>
<comment type="similarity">
    <text evidence="1">Belongs to the DNA mismatch repair MutS family.</text>
</comment>
<gene>
    <name evidence="1" type="primary">mutS</name>
    <name type="ordered locus">RBAM_016880</name>
</gene>
<reference key="1">
    <citation type="journal article" date="2007" name="Nat. Biotechnol.">
        <title>Comparative analysis of the complete genome sequence of the plant growth-promoting bacterium Bacillus amyloliquefaciens FZB42.</title>
        <authorList>
            <person name="Chen X.H."/>
            <person name="Koumoutsi A."/>
            <person name="Scholz R."/>
            <person name="Eisenreich A."/>
            <person name="Schneider K."/>
            <person name="Heinemeyer I."/>
            <person name="Morgenstern B."/>
            <person name="Voss B."/>
            <person name="Hess W.R."/>
            <person name="Reva O."/>
            <person name="Junge H."/>
            <person name="Voigt B."/>
            <person name="Jungblut P.R."/>
            <person name="Vater J."/>
            <person name="Suessmuth R."/>
            <person name="Liesegang H."/>
            <person name="Strittmatter A."/>
            <person name="Gottschalk G."/>
            <person name="Borriss R."/>
        </authorList>
    </citation>
    <scope>NUCLEOTIDE SEQUENCE [LARGE SCALE GENOMIC DNA]</scope>
    <source>
        <strain>DSM 23117 / BGSC 10A6 / LMG 26770 / FZB42</strain>
    </source>
</reference>
<name>MUTS_BACVZ</name>
<evidence type="ECO:0000255" key="1">
    <source>
        <dbReference type="HAMAP-Rule" id="MF_00096"/>
    </source>
</evidence>
<keyword id="KW-0067">ATP-binding</keyword>
<keyword id="KW-0227">DNA damage</keyword>
<keyword id="KW-0234">DNA repair</keyword>
<keyword id="KW-0238">DNA-binding</keyword>
<keyword id="KW-0547">Nucleotide-binding</keyword>
<protein>
    <recommendedName>
        <fullName evidence="1">DNA mismatch repair protein MutS</fullName>
    </recommendedName>
</protein>
<organism>
    <name type="scientific">Bacillus velezensis (strain DSM 23117 / BGSC 10A6 / LMG 26770 / FZB42)</name>
    <name type="common">Bacillus amyloliquefaciens subsp. plantarum</name>
    <dbReference type="NCBI Taxonomy" id="326423"/>
    <lineage>
        <taxon>Bacteria</taxon>
        <taxon>Bacillati</taxon>
        <taxon>Bacillota</taxon>
        <taxon>Bacilli</taxon>
        <taxon>Bacillales</taxon>
        <taxon>Bacillaceae</taxon>
        <taxon>Bacillus</taxon>
        <taxon>Bacillus amyloliquefaciens group</taxon>
    </lineage>
</organism>
<dbReference type="EMBL" id="CP000560">
    <property type="protein sequence ID" value="ABS74051.1"/>
    <property type="molecule type" value="Genomic_DNA"/>
</dbReference>
<dbReference type="SMR" id="A7Z4X5"/>
<dbReference type="KEGG" id="bay:RBAM_016880"/>
<dbReference type="HOGENOM" id="CLU_002472_3_1_9"/>
<dbReference type="Proteomes" id="UP000001120">
    <property type="component" value="Chromosome"/>
</dbReference>
<dbReference type="GO" id="GO:0005829">
    <property type="term" value="C:cytosol"/>
    <property type="evidence" value="ECO:0007669"/>
    <property type="project" value="TreeGrafter"/>
</dbReference>
<dbReference type="GO" id="GO:0005524">
    <property type="term" value="F:ATP binding"/>
    <property type="evidence" value="ECO:0007669"/>
    <property type="project" value="UniProtKB-UniRule"/>
</dbReference>
<dbReference type="GO" id="GO:0140664">
    <property type="term" value="F:ATP-dependent DNA damage sensor activity"/>
    <property type="evidence" value="ECO:0007669"/>
    <property type="project" value="InterPro"/>
</dbReference>
<dbReference type="GO" id="GO:0003684">
    <property type="term" value="F:damaged DNA binding"/>
    <property type="evidence" value="ECO:0007669"/>
    <property type="project" value="UniProtKB-UniRule"/>
</dbReference>
<dbReference type="GO" id="GO:0030983">
    <property type="term" value="F:mismatched DNA binding"/>
    <property type="evidence" value="ECO:0007669"/>
    <property type="project" value="InterPro"/>
</dbReference>
<dbReference type="GO" id="GO:0006298">
    <property type="term" value="P:mismatch repair"/>
    <property type="evidence" value="ECO:0007669"/>
    <property type="project" value="UniProtKB-UniRule"/>
</dbReference>
<dbReference type="CDD" id="cd03284">
    <property type="entry name" value="ABC_MutS1"/>
    <property type="match status" value="1"/>
</dbReference>
<dbReference type="FunFam" id="1.10.1420.10:FF:000007">
    <property type="entry name" value="DNA mismatch repair protein MutS"/>
    <property type="match status" value="1"/>
</dbReference>
<dbReference type="FunFam" id="3.40.1170.10:FF:000001">
    <property type="entry name" value="DNA mismatch repair protein MutS"/>
    <property type="match status" value="1"/>
</dbReference>
<dbReference type="FunFam" id="3.40.50.300:FF:000896">
    <property type="entry name" value="DNA mismatch repair protein MutS"/>
    <property type="match status" value="1"/>
</dbReference>
<dbReference type="Gene3D" id="1.10.1420.10">
    <property type="match status" value="2"/>
</dbReference>
<dbReference type="Gene3D" id="3.40.1170.10">
    <property type="entry name" value="DNA repair protein MutS, domain I"/>
    <property type="match status" value="1"/>
</dbReference>
<dbReference type="Gene3D" id="3.30.420.110">
    <property type="entry name" value="MutS, connector domain"/>
    <property type="match status" value="1"/>
</dbReference>
<dbReference type="Gene3D" id="3.40.50.300">
    <property type="entry name" value="P-loop containing nucleotide triphosphate hydrolases"/>
    <property type="match status" value="1"/>
</dbReference>
<dbReference type="HAMAP" id="MF_00096">
    <property type="entry name" value="MutS"/>
    <property type="match status" value="1"/>
</dbReference>
<dbReference type="InterPro" id="IPR005748">
    <property type="entry name" value="DNA_mismatch_repair_MutS"/>
</dbReference>
<dbReference type="InterPro" id="IPR007695">
    <property type="entry name" value="DNA_mismatch_repair_MutS-lik_N"/>
</dbReference>
<dbReference type="InterPro" id="IPR017261">
    <property type="entry name" value="DNA_mismatch_repair_MutS/MSH"/>
</dbReference>
<dbReference type="InterPro" id="IPR000432">
    <property type="entry name" value="DNA_mismatch_repair_MutS_C"/>
</dbReference>
<dbReference type="InterPro" id="IPR007861">
    <property type="entry name" value="DNA_mismatch_repair_MutS_clamp"/>
</dbReference>
<dbReference type="InterPro" id="IPR007696">
    <property type="entry name" value="DNA_mismatch_repair_MutS_core"/>
</dbReference>
<dbReference type="InterPro" id="IPR016151">
    <property type="entry name" value="DNA_mismatch_repair_MutS_N"/>
</dbReference>
<dbReference type="InterPro" id="IPR036187">
    <property type="entry name" value="DNA_mismatch_repair_MutS_sf"/>
</dbReference>
<dbReference type="InterPro" id="IPR007860">
    <property type="entry name" value="DNA_mmatch_repair_MutS_con_dom"/>
</dbReference>
<dbReference type="InterPro" id="IPR045076">
    <property type="entry name" value="MutS"/>
</dbReference>
<dbReference type="InterPro" id="IPR036678">
    <property type="entry name" value="MutS_con_dom_sf"/>
</dbReference>
<dbReference type="InterPro" id="IPR027417">
    <property type="entry name" value="P-loop_NTPase"/>
</dbReference>
<dbReference type="NCBIfam" id="TIGR01070">
    <property type="entry name" value="mutS1"/>
    <property type="match status" value="1"/>
</dbReference>
<dbReference type="NCBIfam" id="NF003810">
    <property type="entry name" value="PRK05399.1"/>
    <property type="match status" value="1"/>
</dbReference>
<dbReference type="PANTHER" id="PTHR11361:SF34">
    <property type="entry name" value="DNA MISMATCH REPAIR PROTEIN MSH1, MITOCHONDRIAL"/>
    <property type="match status" value="1"/>
</dbReference>
<dbReference type="PANTHER" id="PTHR11361">
    <property type="entry name" value="DNA MISMATCH REPAIR PROTEIN MUTS FAMILY MEMBER"/>
    <property type="match status" value="1"/>
</dbReference>
<dbReference type="Pfam" id="PF01624">
    <property type="entry name" value="MutS_I"/>
    <property type="match status" value="1"/>
</dbReference>
<dbReference type="Pfam" id="PF05188">
    <property type="entry name" value="MutS_II"/>
    <property type="match status" value="1"/>
</dbReference>
<dbReference type="Pfam" id="PF05192">
    <property type="entry name" value="MutS_III"/>
    <property type="match status" value="1"/>
</dbReference>
<dbReference type="Pfam" id="PF05190">
    <property type="entry name" value="MutS_IV"/>
    <property type="match status" value="1"/>
</dbReference>
<dbReference type="Pfam" id="PF00488">
    <property type="entry name" value="MutS_V"/>
    <property type="match status" value="1"/>
</dbReference>
<dbReference type="PIRSF" id="PIRSF037677">
    <property type="entry name" value="DNA_mis_repair_Msh6"/>
    <property type="match status" value="1"/>
</dbReference>
<dbReference type="SMART" id="SM00534">
    <property type="entry name" value="MUTSac"/>
    <property type="match status" value="1"/>
</dbReference>
<dbReference type="SMART" id="SM00533">
    <property type="entry name" value="MUTSd"/>
    <property type="match status" value="1"/>
</dbReference>
<dbReference type="SUPFAM" id="SSF55271">
    <property type="entry name" value="DNA repair protein MutS, domain I"/>
    <property type="match status" value="1"/>
</dbReference>
<dbReference type="SUPFAM" id="SSF53150">
    <property type="entry name" value="DNA repair protein MutS, domain II"/>
    <property type="match status" value="1"/>
</dbReference>
<dbReference type="SUPFAM" id="SSF48334">
    <property type="entry name" value="DNA repair protein MutS, domain III"/>
    <property type="match status" value="1"/>
</dbReference>
<dbReference type="SUPFAM" id="SSF52540">
    <property type="entry name" value="P-loop containing nucleoside triphosphate hydrolases"/>
    <property type="match status" value="1"/>
</dbReference>
<dbReference type="PROSITE" id="PS00486">
    <property type="entry name" value="DNA_MISMATCH_REPAIR_2"/>
    <property type="match status" value="1"/>
</dbReference>